<evidence type="ECO:0000255" key="1"/>
<evidence type="ECO:0000255" key="2">
    <source>
        <dbReference type="PROSITE-ProRule" id="PRU00159"/>
    </source>
</evidence>
<evidence type="ECO:0000255" key="3">
    <source>
        <dbReference type="PROSITE-ProRule" id="PRU10027"/>
    </source>
</evidence>
<evidence type="ECO:0000256" key="4">
    <source>
        <dbReference type="SAM" id="MobiDB-lite"/>
    </source>
</evidence>
<evidence type="ECO:0000305" key="5"/>
<reference key="1">
    <citation type="journal article" date="2005" name="Nature">
        <title>The genome of the social amoeba Dictyostelium discoideum.</title>
        <authorList>
            <person name="Eichinger L."/>
            <person name="Pachebat J.A."/>
            <person name="Gloeckner G."/>
            <person name="Rajandream M.A."/>
            <person name="Sucgang R."/>
            <person name="Berriman M."/>
            <person name="Song J."/>
            <person name="Olsen R."/>
            <person name="Szafranski K."/>
            <person name="Xu Q."/>
            <person name="Tunggal B."/>
            <person name="Kummerfeld S."/>
            <person name="Madera M."/>
            <person name="Konfortov B.A."/>
            <person name="Rivero F."/>
            <person name="Bankier A.T."/>
            <person name="Lehmann R."/>
            <person name="Hamlin N."/>
            <person name="Davies R."/>
            <person name="Gaudet P."/>
            <person name="Fey P."/>
            <person name="Pilcher K."/>
            <person name="Chen G."/>
            <person name="Saunders D."/>
            <person name="Sodergren E.J."/>
            <person name="Davis P."/>
            <person name="Kerhornou A."/>
            <person name="Nie X."/>
            <person name="Hall N."/>
            <person name="Anjard C."/>
            <person name="Hemphill L."/>
            <person name="Bason N."/>
            <person name="Farbrother P."/>
            <person name="Desany B."/>
            <person name="Just E."/>
            <person name="Morio T."/>
            <person name="Rost R."/>
            <person name="Churcher C.M."/>
            <person name="Cooper J."/>
            <person name="Haydock S."/>
            <person name="van Driessche N."/>
            <person name="Cronin A."/>
            <person name="Goodhead I."/>
            <person name="Muzny D.M."/>
            <person name="Mourier T."/>
            <person name="Pain A."/>
            <person name="Lu M."/>
            <person name="Harper D."/>
            <person name="Lindsay R."/>
            <person name="Hauser H."/>
            <person name="James K.D."/>
            <person name="Quiles M."/>
            <person name="Madan Babu M."/>
            <person name="Saito T."/>
            <person name="Buchrieser C."/>
            <person name="Wardroper A."/>
            <person name="Felder M."/>
            <person name="Thangavelu M."/>
            <person name="Johnson D."/>
            <person name="Knights A."/>
            <person name="Loulseged H."/>
            <person name="Mungall K.L."/>
            <person name="Oliver K."/>
            <person name="Price C."/>
            <person name="Quail M.A."/>
            <person name="Urushihara H."/>
            <person name="Hernandez J."/>
            <person name="Rabbinowitsch E."/>
            <person name="Steffen D."/>
            <person name="Sanders M."/>
            <person name="Ma J."/>
            <person name="Kohara Y."/>
            <person name="Sharp S."/>
            <person name="Simmonds M.N."/>
            <person name="Spiegler S."/>
            <person name="Tivey A."/>
            <person name="Sugano S."/>
            <person name="White B."/>
            <person name="Walker D."/>
            <person name="Woodward J.R."/>
            <person name="Winckler T."/>
            <person name="Tanaka Y."/>
            <person name="Shaulsky G."/>
            <person name="Schleicher M."/>
            <person name="Weinstock G.M."/>
            <person name="Rosenthal A."/>
            <person name="Cox E.C."/>
            <person name="Chisholm R.L."/>
            <person name="Gibbs R.A."/>
            <person name="Loomis W.F."/>
            <person name="Platzer M."/>
            <person name="Kay R.R."/>
            <person name="Williams J.G."/>
            <person name="Dear P.H."/>
            <person name="Noegel A.A."/>
            <person name="Barrell B.G."/>
            <person name="Kuspa A."/>
        </authorList>
    </citation>
    <scope>NUCLEOTIDE SEQUENCE [LARGE SCALE GENOMIC DNA]</scope>
    <source>
        <strain>AX4</strain>
    </source>
</reference>
<gene>
    <name type="primary">drkB</name>
    <name type="synonym">rk2</name>
    <name type="ORF">DDB_G0289709</name>
</gene>
<accession>Q54H45</accession>
<organism>
    <name type="scientific">Dictyostelium discoideum</name>
    <name type="common">Social amoeba</name>
    <dbReference type="NCBI Taxonomy" id="44689"/>
    <lineage>
        <taxon>Eukaryota</taxon>
        <taxon>Amoebozoa</taxon>
        <taxon>Evosea</taxon>
        <taxon>Eumycetozoa</taxon>
        <taxon>Dictyostelia</taxon>
        <taxon>Dictyosteliales</taxon>
        <taxon>Dictyosteliaceae</taxon>
        <taxon>Dictyostelium</taxon>
    </lineage>
</organism>
<dbReference type="EC" id="2.7.11.1"/>
<dbReference type="EMBL" id="AAFI02000148">
    <property type="protein sequence ID" value="EAL62566.1"/>
    <property type="molecule type" value="Genomic_DNA"/>
</dbReference>
<dbReference type="RefSeq" id="XP_636073.1">
    <property type="nucleotide sequence ID" value="XM_630981.1"/>
</dbReference>
<dbReference type="SMR" id="Q54H45"/>
<dbReference type="STRING" id="44689.Q54H45"/>
<dbReference type="GlyCosmos" id="Q54H45">
    <property type="glycosylation" value="4 sites, No reported glycans"/>
</dbReference>
<dbReference type="GlyGen" id="Q54H45">
    <property type="glycosylation" value="10 sites"/>
</dbReference>
<dbReference type="PaxDb" id="44689-DDB0229954"/>
<dbReference type="EnsemblProtists" id="EAL62566">
    <property type="protein sequence ID" value="EAL62566"/>
    <property type="gene ID" value="DDB_G0289709"/>
</dbReference>
<dbReference type="GeneID" id="8627283"/>
<dbReference type="KEGG" id="ddi:DDB_G0289709"/>
<dbReference type="dictyBase" id="DDB_G0289709">
    <property type="gene designation" value="drkB"/>
</dbReference>
<dbReference type="VEuPathDB" id="AmoebaDB:DDB_G0289709"/>
<dbReference type="eggNOG" id="KOG0192">
    <property type="taxonomic scope" value="Eukaryota"/>
</dbReference>
<dbReference type="HOGENOM" id="CLU_399254_0_0_1"/>
<dbReference type="InParanoid" id="Q54H45"/>
<dbReference type="OMA" id="SPDICIC"/>
<dbReference type="Reactome" id="R-DDI-5675482">
    <property type="pathway name" value="Regulation of necroptotic cell death"/>
</dbReference>
<dbReference type="PRO" id="PR:Q54H45"/>
<dbReference type="Proteomes" id="UP000002195">
    <property type="component" value="Chromosome 5"/>
</dbReference>
<dbReference type="GO" id="GO:0005737">
    <property type="term" value="C:cytoplasm"/>
    <property type="evidence" value="ECO:0000318"/>
    <property type="project" value="GO_Central"/>
</dbReference>
<dbReference type="GO" id="GO:0016020">
    <property type="term" value="C:membrane"/>
    <property type="evidence" value="ECO:0007669"/>
    <property type="project" value="UniProtKB-SubCell"/>
</dbReference>
<dbReference type="GO" id="GO:0005524">
    <property type="term" value="F:ATP binding"/>
    <property type="evidence" value="ECO:0007669"/>
    <property type="project" value="UniProtKB-KW"/>
</dbReference>
<dbReference type="GO" id="GO:0004672">
    <property type="term" value="F:protein kinase activity"/>
    <property type="evidence" value="ECO:0000318"/>
    <property type="project" value="GO_Central"/>
</dbReference>
<dbReference type="GO" id="GO:0106310">
    <property type="term" value="F:protein serine kinase activity"/>
    <property type="evidence" value="ECO:0007669"/>
    <property type="project" value="RHEA"/>
</dbReference>
<dbReference type="GO" id="GO:0004674">
    <property type="term" value="F:protein serine/threonine kinase activity"/>
    <property type="evidence" value="ECO:0007669"/>
    <property type="project" value="UniProtKB-KW"/>
</dbReference>
<dbReference type="GO" id="GO:0007165">
    <property type="term" value="P:signal transduction"/>
    <property type="evidence" value="ECO:0000318"/>
    <property type="project" value="GO_Central"/>
</dbReference>
<dbReference type="CDD" id="cd13999">
    <property type="entry name" value="STKc_MAP3K-like"/>
    <property type="match status" value="1"/>
</dbReference>
<dbReference type="FunFam" id="1.10.510.10:FF:000476">
    <property type="entry name" value="PAS domain-containing protein tyrosine kinase family protein"/>
    <property type="match status" value="1"/>
</dbReference>
<dbReference type="FunFam" id="3.30.200.20:FF:000060">
    <property type="entry name" value="Serine/threonine-protein kinase isoform 1"/>
    <property type="match status" value="1"/>
</dbReference>
<dbReference type="Gene3D" id="3.30.200.20">
    <property type="entry name" value="Phosphorylase Kinase, domain 1"/>
    <property type="match status" value="1"/>
</dbReference>
<dbReference type="Gene3D" id="1.10.510.10">
    <property type="entry name" value="Transferase(Phosphotransferase) domain 1"/>
    <property type="match status" value="1"/>
</dbReference>
<dbReference type="InterPro" id="IPR011009">
    <property type="entry name" value="Kinase-like_dom_sf"/>
</dbReference>
<dbReference type="InterPro" id="IPR000719">
    <property type="entry name" value="Prot_kinase_dom"/>
</dbReference>
<dbReference type="InterPro" id="IPR017441">
    <property type="entry name" value="Protein_kinase_ATP_BS"/>
</dbReference>
<dbReference type="InterPro" id="IPR001245">
    <property type="entry name" value="Ser-Thr/Tyr_kinase_cat_dom"/>
</dbReference>
<dbReference type="InterPro" id="IPR008271">
    <property type="entry name" value="Ser/Thr_kinase_AS"/>
</dbReference>
<dbReference type="InterPro" id="IPR051681">
    <property type="entry name" value="Ser/Thr_Kinases-Pseudokinases"/>
</dbReference>
<dbReference type="PANTHER" id="PTHR44329:SF298">
    <property type="entry name" value="MIXED LINEAGE KINASE DOMAIN-LIKE PROTEIN"/>
    <property type="match status" value="1"/>
</dbReference>
<dbReference type="PANTHER" id="PTHR44329">
    <property type="entry name" value="SERINE/THREONINE-PROTEIN KINASE TNNI3K-RELATED"/>
    <property type="match status" value="1"/>
</dbReference>
<dbReference type="Pfam" id="PF07714">
    <property type="entry name" value="PK_Tyr_Ser-Thr"/>
    <property type="match status" value="1"/>
</dbReference>
<dbReference type="PRINTS" id="PR00109">
    <property type="entry name" value="TYRKINASE"/>
</dbReference>
<dbReference type="SMART" id="SM00220">
    <property type="entry name" value="S_TKc"/>
    <property type="match status" value="1"/>
</dbReference>
<dbReference type="SUPFAM" id="SSF56112">
    <property type="entry name" value="Protein kinase-like (PK-like)"/>
    <property type="match status" value="1"/>
</dbReference>
<dbReference type="PROSITE" id="PS00107">
    <property type="entry name" value="PROTEIN_KINASE_ATP"/>
    <property type="match status" value="1"/>
</dbReference>
<dbReference type="PROSITE" id="PS50011">
    <property type="entry name" value="PROTEIN_KINASE_DOM"/>
    <property type="match status" value="1"/>
</dbReference>
<dbReference type="PROSITE" id="PS00108">
    <property type="entry name" value="PROTEIN_KINASE_ST"/>
    <property type="match status" value="1"/>
</dbReference>
<sequence length="690" mass="76041">MKVQIVFFSITVFIFVLFLLSVESNTKIKIVPSFLENSNEIEDLYINLDSDSKSSEHTTSSSSSSNSKNKGDSSSSSSNSGSSSNSIISGDSNSKDAPTTSSDSLSPATPIPTDGLLSASTYVTFTGGKVLCENITFCPNGYMYSSDYACNYDIVQNDPATHRGDWNDGIKMFEDPLPKNTTIDQVEGISFTISGAVGCQVTSSATTLEFYIQDLLVLTNTTSRYDICTCGSCYVTFGTEVYKYNMLGYNITGENKFQIQVSVNSMCATTIGITLYYKPPTITPTPTITPTPTITPTPTITPTVTPTATPSTTPSTTPTTTPSTPTPTPTKSPYSGALSPQVKKYIIIASSITGGLLISIFSFVFIRKRLNSKRSGYTQIKDGKDIDTQQIKIGVRIGKGNFGEVYLGTWRGSQVAVKKLPAHNINENILKEFHREINLMKNLRHPNVIQFLGSCLISPDICICTEYMPRGSLYSILHNEKIKISWSLVKRMMIDAAKGIIYLHGSTPVILHRDLKSHNLLVDENWKVKVADFGLSTIEQQGATMTACGTPCWTSPEVLRSQRYTEKADVYSFGIILWECATRQDPYFGIPPFQVIFAVGREGMRPPTPKYGPPKYIQLLKDCLNENPSQRPTMEQCLEILESIETKGFDDIPVNNNNNNNSNNNENNNENNNNSDNNNNDINYSNRVIN</sequence>
<comment type="catalytic activity">
    <reaction>
        <text>L-seryl-[protein] + ATP = O-phospho-L-seryl-[protein] + ADP + H(+)</text>
        <dbReference type="Rhea" id="RHEA:17989"/>
        <dbReference type="Rhea" id="RHEA-COMP:9863"/>
        <dbReference type="Rhea" id="RHEA-COMP:11604"/>
        <dbReference type="ChEBI" id="CHEBI:15378"/>
        <dbReference type="ChEBI" id="CHEBI:29999"/>
        <dbReference type="ChEBI" id="CHEBI:30616"/>
        <dbReference type="ChEBI" id="CHEBI:83421"/>
        <dbReference type="ChEBI" id="CHEBI:456216"/>
        <dbReference type="EC" id="2.7.11.1"/>
    </reaction>
</comment>
<comment type="catalytic activity">
    <reaction>
        <text>L-threonyl-[protein] + ATP = O-phospho-L-threonyl-[protein] + ADP + H(+)</text>
        <dbReference type="Rhea" id="RHEA:46608"/>
        <dbReference type="Rhea" id="RHEA-COMP:11060"/>
        <dbReference type="Rhea" id="RHEA-COMP:11605"/>
        <dbReference type="ChEBI" id="CHEBI:15378"/>
        <dbReference type="ChEBI" id="CHEBI:30013"/>
        <dbReference type="ChEBI" id="CHEBI:30616"/>
        <dbReference type="ChEBI" id="CHEBI:61977"/>
        <dbReference type="ChEBI" id="CHEBI:456216"/>
        <dbReference type="EC" id="2.7.11.1"/>
    </reaction>
</comment>
<comment type="subcellular location">
    <subcellularLocation>
        <location evidence="5">Membrane</location>
        <topology evidence="5">Single-pass type I membrane protein</topology>
    </subcellularLocation>
</comment>
<comment type="similarity">
    <text evidence="5">Belongs to the protein kinase superfamily. TKL Ser/Thr protein kinase family.</text>
</comment>
<feature type="signal peptide" evidence="1">
    <location>
        <begin position="1"/>
        <end position="24"/>
    </location>
</feature>
<feature type="chain" id="PRO_0000358882" description="Probable serine/threonine-protein kinase drkB">
    <location>
        <begin position="25"/>
        <end position="690"/>
    </location>
</feature>
<feature type="transmembrane region" description="Helical" evidence="1">
    <location>
        <begin position="346"/>
        <end position="366"/>
    </location>
</feature>
<feature type="domain" description="Protein kinase" evidence="2">
    <location>
        <begin position="391"/>
        <end position="644"/>
    </location>
</feature>
<feature type="region of interest" description="Disordered" evidence="4">
    <location>
        <begin position="51"/>
        <end position="110"/>
    </location>
</feature>
<feature type="region of interest" description="Disordered" evidence="4">
    <location>
        <begin position="287"/>
        <end position="335"/>
    </location>
</feature>
<feature type="region of interest" description="Disordered" evidence="4">
    <location>
        <begin position="649"/>
        <end position="690"/>
    </location>
</feature>
<feature type="compositionally biased region" description="Low complexity" evidence="4">
    <location>
        <begin position="57"/>
        <end position="96"/>
    </location>
</feature>
<feature type="compositionally biased region" description="Polar residues" evidence="4">
    <location>
        <begin position="97"/>
        <end position="107"/>
    </location>
</feature>
<feature type="compositionally biased region" description="Low complexity" evidence="4">
    <location>
        <begin position="296"/>
        <end position="323"/>
    </location>
</feature>
<feature type="compositionally biased region" description="Low complexity" evidence="4">
    <location>
        <begin position="655"/>
        <end position="681"/>
    </location>
</feature>
<feature type="active site" description="Proton acceptor" evidence="2 3">
    <location>
        <position position="514"/>
    </location>
</feature>
<feature type="binding site" evidence="2">
    <location>
        <begin position="397"/>
        <end position="405"/>
    </location>
    <ligand>
        <name>ATP</name>
        <dbReference type="ChEBI" id="CHEBI:30616"/>
    </ligand>
</feature>
<feature type="binding site" evidence="2">
    <location>
        <position position="418"/>
    </location>
    <ligand>
        <name>ATP</name>
        <dbReference type="ChEBI" id="CHEBI:30616"/>
    </ligand>
</feature>
<feature type="glycosylation site" description="N-linked (GlcNAc...) asparagine" evidence="1">
    <location>
        <position position="134"/>
    </location>
</feature>
<feature type="glycosylation site" description="N-linked (GlcNAc...) asparagine" evidence="1">
    <location>
        <position position="180"/>
    </location>
</feature>
<feature type="glycosylation site" description="N-linked (GlcNAc...) asparagine" evidence="1">
    <location>
        <position position="220"/>
    </location>
</feature>
<feature type="glycosylation site" description="N-linked (GlcNAc...) asparagine" evidence="1">
    <location>
        <position position="250"/>
    </location>
</feature>
<protein>
    <recommendedName>
        <fullName>Probable serine/threonine-protein kinase drkB</fullName>
        <ecNumber>2.7.11.1</ecNumber>
    </recommendedName>
    <alternativeName>
        <fullName>Receptor-like kinase 2</fullName>
    </alternativeName>
    <alternativeName>
        <fullName>Receptor-like kinase B</fullName>
    </alternativeName>
    <alternativeName>
        <fullName>Vesicle-associated receptor tyrosine kinase-like protein 2</fullName>
    </alternativeName>
</protein>
<name>DRKB_DICDI</name>
<keyword id="KW-0067">ATP-binding</keyword>
<keyword id="KW-0325">Glycoprotein</keyword>
<keyword id="KW-0418">Kinase</keyword>
<keyword id="KW-0472">Membrane</keyword>
<keyword id="KW-0547">Nucleotide-binding</keyword>
<keyword id="KW-1185">Reference proteome</keyword>
<keyword id="KW-0723">Serine/threonine-protein kinase</keyword>
<keyword id="KW-0732">Signal</keyword>
<keyword id="KW-0808">Transferase</keyword>
<keyword id="KW-0812">Transmembrane</keyword>
<keyword id="KW-1133">Transmembrane helix</keyword>
<proteinExistence type="inferred from homology"/>